<reference key="1">
    <citation type="journal article" date="2008" name="BMC Genomics">
        <title>The genome sequence of the fish pathogen Aliivibrio salmonicida strain LFI1238 shows extensive evidence of gene decay.</title>
        <authorList>
            <person name="Hjerde E."/>
            <person name="Lorentzen M.S."/>
            <person name="Holden M.T."/>
            <person name="Seeger K."/>
            <person name="Paulsen S."/>
            <person name="Bason N."/>
            <person name="Churcher C."/>
            <person name="Harris D."/>
            <person name="Norbertczak H."/>
            <person name="Quail M.A."/>
            <person name="Sanders S."/>
            <person name="Thurston S."/>
            <person name="Parkhill J."/>
            <person name="Willassen N.P."/>
            <person name="Thomson N.R."/>
        </authorList>
    </citation>
    <scope>NUCLEOTIDE SEQUENCE [LARGE SCALE GENOMIC DNA]</scope>
    <source>
        <strain>LFI1238</strain>
    </source>
</reference>
<sequence length="177" mass="20196">MSKNDHLSDDELSLFREAVQGSKKLRQDTIIHQPSKNFSEQQKQRKSLKEGKNEEFFFSDEFVPLLNEDGPVRYARDGVSKYEVKRLRRGVYVPDVFLDMHGMKQDEAKRELGSMIAYCLKENISCASVMHGIGKHILKQKVPLWLAQHPDVMAFHQAPLEFGGAGAILVLLSIPDR</sequence>
<proteinExistence type="inferred from homology"/>
<accession>B6EII1</accession>
<name>SMRB_ALISL</name>
<keyword id="KW-0255">Endonuclease</keyword>
<keyword id="KW-0378">Hydrolase</keyword>
<keyword id="KW-0540">Nuclease</keyword>
<keyword id="KW-0694">RNA-binding</keyword>
<keyword id="KW-0699">rRNA-binding</keyword>
<comment type="function">
    <text evidence="1">Acts as a ribosome collision sensor. Detects stalled/collided disomes (pairs of ribosomes where the leading ribosome is stalled and a second ribosome has collided with it) and endonucleolytically cleaves mRNA at the 5' boundary of the stalled ribosome. Stalled/collided disomes form a new interface (primarily via the 30S subunits) that binds SmrB. Cleaved mRNA becomes available for tmRNA ligation, leading to ribosomal subunit dissociation and rescue of stalled ribosomes.</text>
</comment>
<comment type="subunit">
    <text evidence="1">Associates with collided ribosomes, but not with correctly translating polysomes.</text>
</comment>
<comment type="similarity">
    <text evidence="1">Belongs to the SmrB family.</text>
</comment>
<organism>
    <name type="scientific">Aliivibrio salmonicida (strain LFI1238)</name>
    <name type="common">Vibrio salmonicida (strain LFI1238)</name>
    <dbReference type="NCBI Taxonomy" id="316275"/>
    <lineage>
        <taxon>Bacteria</taxon>
        <taxon>Pseudomonadati</taxon>
        <taxon>Pseudomonadota</taxon>
        <taxon>Gammaproteobacteria</taxon>
        <taxon>Vibrionales</taxon>
        <taxon>Vibrionaceae</taxon>
        <taxon>Aliivibrio</taxon>
    </lineage>
</organism>
<evidence type="ECO:0000255" key="1">
    <source>
        <dbReference type="HAMAP-Rule" id="MF_01042"/>
    </source>
</evidence>
<evidence type="ECO:0000256" key="2">
    <source>
        <dbReference type="SAM" id="MobiDB-lite"/>
    </source>
</evidence>
<gene>
    <name evidence="1" type="primary">smrB</name>
    <name type="ordered locus">VSAL_I2166</name>
</gene>
<feature type="chain" id="PRO_1000136034" description="Ribosome rescue factor SmrB">
    <location>
        <begin position="1"/>
        <end position="177"/>
    </location>
</feature>
<feature type="domain" description="Smr" evidence="1">
    <location>
        <begin position="98"/>
        <end position="173"/>
    </location>
</feature>
<feature type="region of interest" description="Disordered" evidence="2">
    <location>
        <begin position="22"/>
        <end position="45"/>
    </location>
</feature>
<feature type="compositionally biased region" description="Polar residues" evidence="2">
    <location>
        <begin position="30"/>
        <end position="41"/>
    </location>
</feature>
<protein>
    <recommendedName>
        <fullName evidence="1">Ribosome rescue factor SmrB</fullName>
        <ecNumber evidence="1">3.1.-.-</ecNumber>
    </recommendedName>
</protein>
<dbReference type="EC" id="3.1.-.-" evidence="1"/>
<dbReference type="EMBL" id="FM178379">
    <property type="protein sequence ID" value="CAQ79851.1"/>
    <property type="molecule type" value="Genomic_DNA"/>
</dbReference>
<dbReference type="RefSeq" id="WP_012550687.1">
    <property type="nucleotide sequence ID" value="NC_011312.1"/>
</dbReference>
<dbReference type="SMR" id="B6EII1"/>
<dbReference type="KEGG" id="vsa:VSAL_I2166"/>
<dbReference type="eggNOG" id="COG2840">
    <property type="taxonomic scope" value="Bacteria"/>
</dbReference>
<dbReference type="HOGENOM" id="CLU_055978_4_0_6"/>
<dbReference type="Proteomes" id="UP000001730">
    <property type="component" value="Chromosome 1"/>
</dbReference>
<dbReference type="GO" id="GO:0004521">
    <property type="term" value="F:RNA endonuclease activity"/>
    <property type="evidence" value="ECO:0007669"/>
    <property type="project" value="UniProtKB-UniRule"/>
</dbReference>
<dbReference type="GO" id="GO:0019843">
    <property type="term" value="F:rRNA binding"/>
    <property type="evidence" value="ECO:0007669"/>
    <property type="project" value="UniProtKB-UniRule"/>
</dbReference>
<dbReference type="GO" id="GO:0072344">
    <property type="term" value="P:rescue of stalled ribosome"/>
    <property type="evidence" value="ECO:0007669"/>
    <property type="project" value="UniProtKB-UniRule"/>
</dbReference>
<dbReference type="Gene3D" id="3.30.1370.110">
    <property type="match status" value="1"/>
</dbReference>
<dbReference type="HAMAP" id="MF_01042">
    <property type="entry name" value="SmrB"/>
    <property type="match status" value="1"/>
</dbReference>
<dbReference type="InterPro" id="IPR002625">
    <property type="entry name" value="Smr_dom"/>
</dbReference>
<dbReference type="InterPro" id="IPR036063">
    <property type="entry name" value="Smr_dom_sf"/>
</dbReference>
<dbReference type="InterPro" id="IPR022990">
    <property type="entry name" value="SmrB-like"/>
</dbReference>
<dbReference type="NCBIfam" id="NF003432">
    <property type="entry name" value="PRK04946.1"/>
    <property type="match status" value="1"/>
</dbReference>
<dbReference type="PANTHER" id="PTHR35562">
    <property type="entry name" value="DNA ENDONUCLEASE SMRA-RELATED"/>
    <property type="match status" value="1"/>
</dbReference>
<dbReference type="PANTHER" id="PTHR35562:SF1">
    <property type="entry name" value="UPF0115 PROTEIN YFCN"/>
    <property type="match status" value="1"/>
</dbReference>
<dbReference type="Pfam" id="PF01713">
    <property type="entry name" value="Smr"/>
    <property type="match status" value="1"/>
</dbReference>
<dbReference type="SMART" id="SM00463">
    <property type="entry name" value="SMR"/>
    <property type="match status" value="1"/>
</dbReference>
<dbReference type="SUPFAM" id="SSF160443">
    <property type="entry name" value="SMR domain-like"/>
    <property type="match status" value="1"/>
</dbReference>
<dbReference type="PROSITE" id="PS50828">
    <property type="entry name" value="SMR"/>
    <property type="match status" value="1"/>
</dbReference>